<name>CYSD_ECOLI</name>
<reference key="1">
    <citation type="journal article" date="1992" name="J. Biol. Chem.">
        <title>The DNA sequence of the sulfate activation locus from Escherichia coli K-12.</title>
        <authorList>
            <person name="Leyh T.S."/>
            <person name="Vogt T.F."/>
            <person name="Suo Y."/>
        </authorList>
    </citation>
    <scope>NUCLEOTIDE SEQUENCE [GENOMIC DNA]</scope>
    <scope>PROTEIN SEQUENCE OF 1-5</scope>
    <source>
        <strain>K12</strain>
    </source>
</reference>
<reference key="2">
    <citation type="journal article" date="1997" name="Science">
        <title>The complete genome sequence of Escherichia coli K-12.</title>
        <authorList>
            <person name="Blattner F.R."/>
            <person name="Plunkett G. III"/>
            <person name="Bloch C.A."/>
            <person name="Perna N.T."/>
            <person name="Burland V."/>
            <person name="Riley M."/>
            <person name="Collado-Vides J."/>
            <person name="Glasner J.D."/>
            <person name="Rode C.K."/>
            <person name="Mayhew G.F."/>
            <person name="Gregor J."/>
            <person name="Davis N.W."/>
            <person name="Kirkpatrick H.A."/>
            <person name="Goeden M.A."/>
            <person name="Rose D.J."/>
            <person name="Mau B."/>
            <person name="Shao Y."/>
        </authorList>
    </citation>
    <scope>NUCLEOTIDE SEQUENCE [LARGE SCALE GENOMIC DNA]</scope>
    <source>
        <strain>K12 / MG1655 / ATCC 47076</strain>
    </source>
</reference>
<reference key="3">
    <citation type="journal article" date="2006" name="Mol. Syst. Biol.">
        <title>Highly accurate genome sequences of Escherichia coli K-12 strains MG1655 and W3110.</title>
        <authorList>
            <person name="Hayashi K."/>
            <person name="Morooka N."/>
            <person name="Yamamoto Y."/>
            <person name="Fujita K."/>
            <person name="Isono K."/>
            <person name="Choi S."/>
            <person name="Ohtsubo E."/>
            <person name="Baba T."/>
            <person name="Wanner B.L."/>
            <person name="Mori H."/>
            <person name="Horiuchi T."/>
        </authorList>
    </citation>
    <scope>NUCLEOTIDE SEQUENCE [LARGE SCALE GENOMIC DNA]</scope>
    <source>
        <strain>K12 / W3110 / ATCC 27325 / DSM 5911</strain>
    </source>
</reference>
<reference key="4">
    <citation type="journal article" date="1990" name="Gene">
        <title>Promoter elements and regulation of expression of the cysD gene of Escherichia coli K-12.</title>
        <authorList>
            <person name="Malo M.S."/>
            <person name="Loughlin R.E."/>
        </authorList>
    </citation>
    <scope>NUCLEOTIDE SEQUENCE [GENOMIC DNA] OF 1-27</scope>
    <source>
        <strain>K12</strain>
    </source>
</reference>
<reference key="5">
    <citation type="journal article" date="1988" name="J. Biol. Chem.">
        <title>The sulfate activation locus of Escherichia coli K12: cloning, genetic, and enzymatic characterization.</title>
        <authorList>
            <person name="Leyh T.S."/>
            <person name="Taylor J.C."/>
            <person name="Markham G.D."/>
        </authorList>
    </citation>
    <scope>FUNCTION</scope>
    <scope>CATALYTIC ACTIVITY</scope>
    <scope>PATHWAY</scope>
</reference>
<reference key="6">
    <citation type="journal article" date="1994" name="Biochemistry">
        <title>The energetic linkage of GTP hydrolysis and the synthesis of activated sulfate.</title>
        <authorList>
            <person name="Liu C."/>
            <person name="Suo Y."/>
            <person name="Leyh T.S."/>
        </authorList>
    </citation>
    <scope>FUNCTION</scope>
    <scope>CATALYTIC ACTIVITY</scope>
    <scope>ACTIVITY REGULATION</scope>
    <scope>PATHWAY</scope>
</reference>
<reference key="7">
    <citation type="journal article" date="1997" name="Electrophoresis">
        <title>Escherichia coli proteome analysis using the gene-protein database.</title>
        <authorList>
            <person name="VanBogelen R.A."/>
            <person name="Abshire K.Z."/>
            <person name="Moldover B."/>
            <person name="Olson E.R."/>
            <person name="Neidhardt F.C."/>
        </authorList>
    </citation>
    <scope>IDENTIFICATION BY 2D-GEL</scope>
</reference>
<sequence length="302" mass="35188">MDQIRLTHLRQLEAESIHIIREVAAEFSNPVMLYSIGKDSSVMLHLARKAFYPGTLPFPLLHVDTGWKFREMYEFRDRTAKAYGCELLVHKNPEGVAMGINPFVHGSAKHTDIMKTEGLKQALNKYGFDAAFGGARRDEEKSRAKERIYSFRDRFHRWDPKNQRPELWHNYNGQINKGESIRVFPLSNWTEQDIWQYIWLENIDIVPLYLAAERPVLERDGMLMMIDDNRIDLQPGEVIKKRMVRFRTLGCWPLTGAVESNAQTLPEIIEEMLVSTTSERQGRVIDRDQAGSMELKKRQGYF</sequence>
<organism>
    <name type="scientific">Escherichia coli (strain K12)</name>
    <dbReference type="NCBI Taxonomy" id="83333"/>
    <lineage>
        <taxon>Bacteria</taxon>
        <taxon>Pseudomonadati</taxon>
        <taxon>Pseudomonadota</taxon>
        <taxon>Gammaproteobacteria</taxon>
        <taxon>Enterobacterales</taxon>
        <taxon>Enterobacteriaceae</taxon>
        <taxon>Escherichia</taxon>
    </lineage>
</organism>
<evidence type="ECO:0000255" key="1">
    <source>
        <dbReference type="HAMAP-Rule" id="MF_00064"/>
    </source>
</evidence>
<evidence type="ECO:0000269" key="2">
    <source>
    </source>
</evidence>
<evidence type="ECO:0000269" key="3">
    <source>
    </source>
</evidence>
<evidence type="ECO:0000305" key="4"/>
<accession>P21156</accession>
<accession>Q2MA77</accession>
<dbReference type="EC" id="2.7.7.4" evidence="2 3"/>
<dbReference type="EMBL" id="M74586">
    <property type="protein sequence ID" value="AAA23645.1"/>
    <property type="molecule type" value="Genomic_DNA"/>
</dbReference>
<dbReference type="EMBL" id="U29579">
    <property type="protein sequence ID" value="AAA69262.1"/>
    <property type="molecule type" value="Genomic_DNA"/>
</dbReference>
<dbReference type="EMBL" id="U00096">
    <property type="protein sequence ID" value="AAC75794.1"/>
    <property type="molecule type" value="Genomic_DNA"/>
</dbReference>
<dbReference type="EMBL" id="AP009048">
    <property type="protein sequence ID" value="BAE76829.1"/>
    <property type="molecule type" value="Genomic_DNA"/>
</dbReference>
<dbReference type="EMBL" id="M35098">
    <property type="protein sequence ID" value="AAA74892.1"/>
    <property type="molecule type" value="Genomic_DNA"/>
</dbReference>
<dbReference type="PIR" id="D65056">
    <property type="entry name" value="D65056"/>
</dbReference>
<dbReference type="RefSeq" id="NP_417232.1">
    <property type="nucleotide sequence ID" value="NC_000913.3"/>
</dbReference>
<dbReference type="RefSeq" id="WP_000372108.1">
    <property type="nucleotide sequence ID" value="NZ_STEB01000027.1"/>
</dbReference>
<dbReference type="SMR" id="P21156"/>
<dbReference type="BioGRID" id="4263040">
    <property type="interactions" value="31"/>
</dbReference>
<dbReference type="BioGRID" id="851549">
    <property type="interactions" value="1"/>
</dbReference>
<dbReference type="ComplexPortal" id="CPX-4471">
    <property type="entry name" value="Sulfate adenylyltransferase complex"/>
</dbReference>
<dbReference type="DIP" id="DIP-360N"/>
<dbReference type="FunCoup" id="P21156">
    <property type="interactions" value="183"/>
</dbReference>
<dbReference type="IntAct" id="P21156">
    <property type="interactions" value="5"/>
</dbReference>
<dbReference type="STRING" id="511145.b2752"/>
<dbReference type="jPOST" id="P21156"/>
<dbReference type="PaxDb" id="511145-b2752"/>
<dbReference type="EnsemblBacteria" id="AAC75794">
    <property type="protein sequence ID" value="AAC75794"/>
    <property type="gene ID" value="b2752"/>
</dbReference>
<dbReference type="GeneID" id="93779254"/>
<dbReference type="GeneID" id="947217"/>
<dbReference type="KEGG" id="ecj:JW2722"/>
<dbReference type="KEGG" id="eco:b2752"/>
<dbReference type="KEGG" id="ecoc:C3026_15130"/>
<dbReference type="PATRIC" id="fig|1411691.4.peg.3988"/>
<dbReference type="EchoBASE" id="EB0183"/>
<dbReference type="eggNOG" id="COG0175">
    <property type="taxonomic scope" value="Bacteria"/>
</dbReference>
<dbReference type="HOGENOM" id="CLU_043026_0_0_6"/>
<dbReference type="InParanoid" id="P21156"/>
<dbReference type="OMA" id="WQYIHLE"/>
<dbReference type="OrthoDB" id="9772604at2"/>
<dbReference type="PhylomeDB" id="P21156"/>
<dbReference type="BioCyc" id="EcoCyc:CYSD-MONOMER"/>
<dbReference type="BioCyc" id="MetaCyc:CYSD-MONOMER"/>
<dbReference type="SABIO-RK" id="P21156"/>
<dbReference type="UniPathway" id="UPA00140">
    <property type="reaction ID" value="UER00204"/>
</dbReference>
<dbReference type="PRO" id="PR:P21156"/>
<dbReference type="Proteomes" id="UP000000625">
    <property type="component" value="Chromosome"/>
</dbReference>
<dbReference type="GO" id="GO:0009336">
    <property type="term" value="C:sulfate adenylyltransferase complex (ATP)"/>
    <property type="evidence" value="ECO:0000353"/>
    <property type="project" value="ComplexPortal"/>
</dbReference>
<dbReference type="GO" id="GO:0005524">
    <property type="term" value="F:ATP binding"/>
    <property type="evidence" value="ECO:0007669"/>
    <property type="project" value="UniProtKB-KW"/>
</dbReference>
<dbReference type="GO" id="GO:0004781">
    <property type="term" value="F:sulfate adenylyltransferase (ATP) activity"/>
    <property type="evidence" value="ECO:0000314"/>
    <property type="project" value="EcoCyc"/>
</dbReference>
<dbReference type="GO" id="GO:0070814">
    <property type="term" value="P:hydrogen sulfide biosynthetic process"/>
    <property type="evidence" value="ECO:0007669"/>
    <property type="project" value="UniProtKB-UniRule"/>
</dbReference>
<dbReference type="GO" id="GO:0006979">
    <property type="term" value="P:response to oxidative stress"/>
    <property type="evidence" value="ECO:0000315"/>
    <property type="project" value="EcoCyc"/>
</dbReference>
<dbReference type="GO" id="GO:0000103">
    <property type="term" value="P:sulfate assimilation"/>
    <property type="evidence" value="ECO:0000314"/>
    <property type="project" value="ComplexPortal"/>
</dbReference>
<dbReference type="GO" id="GO:0006790">
    <property type="term" value="P:sulfur compound metabolic process"/>
    <property type="evidence" value="ECO:0000314"/>
    <property type="project" value="EcoCyc"/>
</dbReference>
<dbReference type="CDD" id="cd23946">
    <property type="entry name" value="Sulfate_adenylyltransferase_2"/>
    <property type="match status" value="1"/>
</dbReference>
<dbReference type="FunFam" id="3.40.50.620:FF:000002">
    <property type="entry name" value="Sulfate adenylyltransferase subunit 2"/>
    <property type="match status" value="1"/>
</dbReference>
<dbReference type="Gene3D" id="3.40.50.620">
    <property type="entry name" value="HUPs"/>
    <property type="match status" value="1"/>
</dbReference>
<dbReference type="HAMAP" id="MF_00064">
    <property type="entry name" value="Sulf_adenylyltr_sub2"/>
    <property type="match status" value="1"/>
</dbReference>
<dbReference type="InterPro" id="IPR002500">
    <property type="entry name" value="PAPS_reduct_dom"/>
</dbReference>
<dbReference type="InterPro" id="IPR014729">
    <property type="entry name" value="Rossmann-like_a/b/a_fold"/>
</dbReference>
<dbReference type="InterPro" id="IPR011784">
    <property type="entry name" value="SO4_adenylTrfase_ssu"/>
</dbReference>
<dbReference type="InterPro" id="IPR050128">
    <property type="entry name" value="Sulfate_adenylyltrnsfr_sub2"/>
</dbReference>
<dbReference type="NCBIfam" id="TIGR02039">
    <property type="entry name" value="CysD"/>
    <property type="match status" value="1"/>
</dbReference>
<dbReference type="NCBIfam" id="NF003587">
    <property type="entry name" value="PRK05253.1"/>
    <property type="match status" value="1"/>
</dbReference>
<dbReference type="NCBIfam" id="NF009214">
    <property type="entry name" value="PRK12563.1"/>
    <property type="match status" value="1"/>
</dbReference>
<dbReference type="PANTHER" id="PTHR43196">
    <property type="entry name" value="SULFATE ADENYLYLTRANSFERASE SUBUNIT 2"/>
    <property type="match status" value="1"/>
</dbReference>
<dbReference type="PANTHER" id="PTHR43196:SF1">
    <property type="entry name" value="SULFATE ADENYLYLTRANSFERASE SUBUNIT 2"/>
    <property type="match status" value="1"/>
</dbReference>
<dbReference type="Pfam" id="PF01507">
    <property type="entry name" value="PAPS_reduct"/>
    <property type="match status" value="1"/>
</dbReference>
<dbReference type="PIRSF" id="PIRSF002936">
    <property type="entry name" value="CysDAde_trans"/>
    <property type="match status" value="1"/>
</dbReference>
<dbReference type="SUPFAM" id="SSF52402">
    <property type="entry name" value="Adenine nucleotide alpha hydrolases-like"/>
    <property type="match status" value="1"/>
</dbReference>
<gene>
    <name type="primary">cysD</name>
    <name type="ordered locus">b2752</name>
    <name type="ordered locus">JW2722</name>
</gene>
<keyword id="KW-0067">ATP-binding</keyword>
<keyword id="KW-0903">Direct protein sequencing</keyword>
<keyword id="KW-0547">Nucleotide-binding</keyword>
<keyword id="KW-0548">Nucleotidyltransferase</keyword>
<keyword id="KW-1185">Reference proteome</keyword>
<keyword id="KW-0808">Transferase</keyword>
<proteinExistence type="evidence at protein level"/>
<protein>
    <recommendedName>
        <fullName>Sulfate adenylyltransferase subunit 2</fullName>
        <ecNumber evidence="2 3">2.7.7.4</ecNumber>
    </recommendedName>
    <alternativeName>
        <fullName>ATP-sulfurylase small subunit</fullName>
    </alternativeName>
    <alternativeName>
        <fullName>Sulfate adenylate transferase</fullName>
        <shortName>SAT</shortName>
    </alternativeName>
</protein>
<comment type="function">
    <text evidence="1 2 3">With CysN forms the ATP sulfurylase (ATPS) that catalyzes the adenylation of sulfate producing adenosine 5'-phosphosulfate (APS) and diphosphate, the first enzymatic step in sulfur assimilation pathway. APS synthesis involves the formation of a high-energy phosphoric-sulfuric acid anhydride bond driven by GTP hydrolysis by CysN coupled to ATP hydrolysis by CysD.</text>
</comment>
<comment type="catalytic activity">
    <reaction evidence="1 2 3">
        <text>sulfate + ATP + H(+) = adenosine 5'-phosphosulfate + diphosphate</text>
        <dbReference type="Rhea" id="RHEA:18133"/>
        <dbReference type="ChEBI" id="CHEBI:15378"/>
        <dbReference type="ChEBI" id="CHEBI:16189"/>
        <dbReference type="ChEBI" id="CHEBI:30616"/>
        <dbReference type="ChEBI" id="CHEBI:33019"/>
        <dbReference type="ChEBI" id="CHEBI:58243"/>
        <dbReference type="EC" id="2.7.7.4"/>
    </reaction>
    <physiologicalReaction direction="left-to-right" evidence="2 3">
        <dbReference type="Rhea" id="RHEA:18134"/>
    </physiologicalReaction>
</comment>
<comment type="activity regulation">
    <text evidence="3">Stimulated by an intrinsic GTPase (Probably CysN).</text>
</comment>
<comment type="pathway">
    <text evidence="1 2 3">Sulfur metabolism; hydrogen sulfide biosynthesis; sulfite from sulfate: step 1/3.</text>
</comment>
<comment type="subunit">
    <text evidence="1">Heterodimer composed of CysD, the smaller subunit, and CysN.</text>
</comment>
<comment type="interaction">
    <interactant intactId="EBI-1130200">
        <id>P21156</id>
    </interactant>
    <interactant intactId="EBI-559728">
        <id>P23845</id>
        <label>cysN</label>
    </interactant>
    <organismsDiffer>false</organismsDiffer>
    <experiments>2</experiments>
</comment>
<comment type="similarity">
    <text evidence="1 4">Belongs to the PAPS reductase family. CysD subfamily.</text>
</comment>
<feature type="chain" id="PRO_0000100664" description="Sulfate adenylyltransferase subunit 2">
    <location>
        <begin position="1"/>
        <end position="302"/>
    </location>
</feature>
<feature type="sequence conflict" description="In Ref. 1; AAA23645." evidence="4" ref="1">
    <original>S</original>
    <variation>T</variation>
    <location>
        <position position="180"/>
    </location>
</feature>